<accession>Q54530</accession>
<protein>
    <recommendedName>
        <fullName>Aklavinone 12-hydroxylase RdmE</fullName>
        <ecNumber>1.14.13.180</ecNumber>
    </recommendedName>
    <alternativeName>
        <fullName>Aklavinone 11-hydroxylase</fullName>
    </alternativeName>
</protein>
<organism>
    <name type="scientific">Streptomyces purpurascens</name>
    <dbReference type="NCBI Taxonomy" id="1924"/>
    <lineage>
        <taxon>Bacteria</taxon>
        <taxon>Bacillati</taxon>
        <taxon>Actinomycetota</taxon>
        <taxon>Actinomycetes</taxon>
        <taxon>Kitasatosporales</taxon>
        <taxon>Streptomycetaceae</taxon>
        <taxon>Streptomyces</taxon>
    </lineage>
</organism>
<keyword id="KW-0002">3D-structure</keyword>
<keyword id="KW-0045">Antibiotic biosynthesis</keyword>
<keyword id="KW-0903">Direct protein sequencing</keyword>
<keyword id="KW-0274">FAD</keyword>
<keyword id="KW-0285">Flavoprotein</keyword>
<keyword id="KW-0520">NAD</keyword>
<keyword id="KW-0521">NADP</keyword>
<keyword id="KW-0547">Nucleotide-binding</keyword>
<keyword id="KW-0560">Oxidoreductase</keyword>
<comment type="function">
    <text evidence="1 2">Involved in the biosynthesis of the anthracyclines carminomycin, rhodomycin and daunorubicin (daunomycin) which are aromatic polyketide antibiotics that exhibit high cytotoxicity and are widely applied in the chemotherapy of a variety of cancers. Catalyzes the incorporation of a hydroxyl group at position C-11 of aklavinone, resulting in epsilon-rhodomycinone. It cannot accept substrates glycosylated at position C-7 and is specific for the C-9R configuration of anthracyclines. It can use both NAD or NADP but it is slowly inactivated in the presence of NADH.</text>
</comment>
<comment type="catalytic activity">
    <reaction evidence="1">
        <text>aklavinone + NADPH + O2 + H(+) = epsilon-rhodomycinone + NADP(+) + H2O</text>
        <dbReference type="Rhea" id="RHEA:37835"/>
        <dbReference type="ChEBI" id="CHEBI:15377"/>
        <dbReference type="ChEBI" id="CHEBI:15378"/>
        <dbReference type="ChEBI" id="CHEBI:15379"/>
        <dbReference type="ChEBI" id="CHEBI:31181"/>
        <dbReference type="ChEBI" id="CHEBI:57783"/>
        <dbReference type="ChEBI" id="CHEBI:58349"/>
        <dbReference type="ChEBI" id="CHEBI:75291"/>
        <dbReference type="EC" id="1.14.13.180"/>
    </reaction>
</comment>
<comment type="cofactor">
    <cofactor evidence="2">
        <name>FAD</name>
        <dbReference type="ChEBI" id="CHEBI:57692"/>
    </cofactor>
</comment>
<comment type="activity regulation">
    <text evidence="1">Inhibited by phenylglyoxal and 2,3-butanedione. NADP provides a partial protection against inhibition by phenylglyoxal. Increasing the methanol concentration in the assay causes inhibition of the enzyme.</text>
</comment>
<comment type="biophysicochemical properties">
    <kinetics>
        <KM evidence="1">2 uM for NAD (at pH 7.5)</KM>
        <KM evidence="1">10 uM for aklavinone (at pH 7.5)</KM>
        <KM evidence="1">2 mM for NADP (at pH 7.5)</KM>
    </kinetics>
    <phDependence>
        <text evidence="1">Optimum pH is near 7.4.</text>
    </phDependence>
    <temperatureDependence>
        <text evidence="1">Optimum temperature is 37 degrees Celsius.</text>
    </temperatureDependence>
</comment>
<comment type="pathway">
    <text>Antibiotic biosynthesis; daunorubicin biosynthesis.</text>
</comment>
<comment type="pathway">
    <text>Antibiotic biosynthesis; carminomycin biosynthesis.</text>
</comment>
<comment type="pathway">
    <text>Antibiotic biosynthesis; rhodomycin biosynthesis.</text>
</comment>
<comment type="subunit">
    <text evidence="1 2">Monomer.</text>
</comment>
<comment type="similarity">
    <text evidence="3">Belongs to the PheA/TfdB FAD monooxygenase family.</text>
</comment>
<dbReference type="EC" id="1.14.13.180"/>
<dbReference type="EMBL" id="U10405">
    <property type="protein sequence ID" value="AAA83424.1"/>
    <property type="molecule type" value="Genomic_DNA"/>
</dbReference>
<dbReference type="RefSeq" id="WP_189725818.1">
    <property type="nucleotide sequence ID" value="NZ_BMUK01000008.1"/>
</dbReference>
<dbReference type="PDB" id="3IHG">
    <property type="method" value="X-ray"/>
    <property type="resolution" value="2.49 A"/>
    <property type="chains" value="A/B/C=1-535"/>
</dbReference>
<dbReference type="PDBsum" id="3IHG"/>
<dbReference type="SMR" id="Q54530"/>
<dbReference type="KEGG" id="ag:AAA83424"/>
<dbReference type="BRENDA" id="1.14.13.180">
    <property type="organism ID" value="6079"/>
</dbReference>
<dbReference type="UniPathway" id="UPA00054"/>
<dbReference type="UniPathway" id="UPA01040"/>
<dbReference type="UniPathway" id="UPA01042"/>
<dbReference type="EvolutionaryTrace" id="Q54530"/>
<dbReference type="GO" id="GO:0071949">
    <property type="term" value="F:FAD binding"/>
    <property type="evidence" value="ECO:0000314"/>
    <property type="project" value="UniProtKB"/>
</dbReference>
<dbReference type="GO" id="GO:0016709">
    <property type="term" value="F:oxidoreductase activity, acting on paired donors, with incorporation or reduction of molecular oxygen, NAD(P)H as one donor, and incorporation of one atom of oxygen"/>
    <property type="evidence" value="ECO:0000314"/>
    <property type="project" value="UniProtKB"/>
</dbReference>
<dbReference type="GO" id="GO:1901771">
    <property type="term" value="P:daunorubicin biosynthetic process"/>
    <property type="evidence" value="ECO:0000314"/>
    <property type="project" value="UniProtKB"/>
</dbReference>
<dbReference type="Gene3D" id="3.40.30.120">
    <property type="match status" value="1"/>
</dbReference>
<dbReference type="Gene3D" id="3.30.9.10">
    <property type="entry name" value="D-Amino Acid Oxidase, subunit A, domain 2"/>
    <property type="match status" value="1"/>
</dbReference>
<dbReference type="Gene3D" id="3.50.50.60">
    <property type="entry name" value="FAD/NAD(P)-binding domain"/>
    <property type="match status" value="1"/>
</dbReference>
<dbReference type="InterPro" id="IPR002938">
    <property type="entry name" value="FAD-bd"/>
</dbReference>
<dbReference type="InterPro" id="IPR036188">
    <property type="entry name" value="FAD/NAD-bd_sf"/>
</dbReference>
<dbReference type="InterPro" id="IPR050641">
    <property type="entry name" value="RIFMO-like"/>
</dbReference>
<dbReference type="NCBIfam" id="NF046068">
    <property type="entry name" value="AkvoneHdxseDnrF"/>
    <property type="match status" value="1"/>
</dbReference>
<dbReference type="NCBIfam" id="NF046069">
    <property type="entry name" value="AkvoneHdxseRdmE"/>
    <property type="match status" value="1"/>
</dbReference>
<dbReference type="PANTHER" id="PTHR43004:SF19">
    <property type="entry name" value="BINDING MONOOXYGENASE, PUTATIVE (JCVI)-RELATED"/>
    <property type="match status" value="1"/>
</dbReference>
<dbReference type="PANTHER" id="PTHR43004">
    <property type="entry name" value="TRK SYSTEM POTASSIUM UPTAKE PROTEIN"/>
    <property type="match status" value="1"/>
</dbReference>
<dbReference type="Pfam" id="PF01494">
    <property type="entry name" value="FAD_binding_3"/>
    <property type="match status" value="1"/>
</dbReference>
<dbReference type="Pfam" id="PF21274">
    <property type="entry name" value="Rng_hyd_C"/>
    <property type="match status" value="1"/>
</dbReference>
<dbReference type="PRINTS" id="PR00420">
    <property type="entry name" value="RNGMNOXGNASE"/>
</dbReference>
<dbReference type="SUPFAM" id="SSF51905">
    <property type="entry name" value="FAD/NAD(P)-binding domain"/>
    <property type="match status" value="1"/>
</dbReference>
<feature type="initiator methionine" description="Removed" evidence="1">
    <location>
        <position position="1"/>
    </location>
</feature>
<feature type="chain" id="PRO_0000425675" description="Aklavinone 12-hydroxylase RdmE">
    <location>
        <begin position="2"/>
        <end position="535"/>
    </location>
</feature>
<feature type="active site" description="Proton acceptor" evidence="2">
    <location>
        <position position="224"/>
    </location>
</feature>
<feature type="binding site" evidence="2 4">
    <location>
        <position position="15"/>
    </location>
    <ligand>
        <name>FAD</name>
        <dbReference type="ChEBI" id="CHEBI:57692"/>
    </ligand>
</feature>
<feature type="binding site" evidence="2 4">
    <location>
        <position position="16"/>
    </location>
    <ligand>
        <name>FAD</name>
        <dbReference type="ChEBI" id="CHEBI:57692"/>
    </ligand>
</feature>
<feature type="binding site" evidence="2 4">
    <location>
        <position position="35"/>
    </location>
    <ligand>
        <name>FAD</name>
        <dbReference type="ChEBI" id="CHEBI:57692"/>
    </ligand>
</feature>
<feature type="binding site" evidence="2 4">
    <location>
        <position position="119"/>
    </location>
    <ligand>
        <name>FAD</name>
        <dbReference type="ChEBI" id="CHEBI:57692"/>
    </ligand>
</feature>
<feature type="binding site" evidence="2 4">
    <location>
        <position position="143"/>
    </location>
    <ligand>
        <name>FAD</name>
        <dbReference type="ChEBI" id="CHEBI:57692"/>
    </ligand>
</feature>
<feature type="binding site" evidence="2 4">
    <location>
        <position position="308"/>
    </location>
    <ligand>
        <name>FAD</name>
        <dbReference type="ChEBI" id="CHEBI:57692"/>
    </ligand>
</feature>
<feature type="binding site" evidence="2">
    <location>
        <position position="317"/>
    </location>
    <ligand>
        <name>aklavinone</name>
        <dbReference type="ChEBI" id="CHEBI:31181"/>
    </ligand>
</feature>
<feature type="mutagenesis site" description="Loss of hydroxylase activity." evidence="2">
    <original>Y</original>
    <variation>F</variation>
    <location>
        <position position="224"/>
    </location>
</feature>
<feature type="mutagenesis site" description="Hydroxylase activity similar as the wild-type enzyme." evidence="2">
    <original>R</original>
    <variation>A</variation>
    <location>
        <position position="373"/>
    </location>
</feature>
<feature type="mutagenesis site" description="Hydroxylase activity similar as the wild-type enzyme." evidence="2">
    <original>R</original>
    <variation>M</variation>
    <location>
        <position position="373"/>
    </location>
</feature>
<feature type="mutagenesis site" description="Hydroxylase activity similar as the wild-type enzyme." evidence="2">
    <original>R</original>
    <variation>Q</variation>
    <location>
        <position position="373"/>
    </location>
</feature>
<feature type="strand" evidence="5">
    <location>
        <begin position="5"/>
        <end position="11"/>
    </location>
</feature>
<feature type="helix" evidence="5">
    <location>
        <begin position="15"/>
        <end position="25"/>
    </location>
</feature>
<feature type="turn" evidence="5">
    <location>
        <begin position="26"/>
        <end position="28"/>
    </location>
</feature>
<feature type="strand" evidence="5">
    <location>
        <begin position="31"/>
        <end position="34"/>
    </location>
</feature>
<feature type="strand" evidence="5">
    <location>
        <begin position="36"/>
        <end position="39"/>
    </location>
</feature>
<feature type="helix" evidence="5">
    <location>
        <begin position="51"/>
        <end position="59"/>
    </location>
</feature>
<feature type="helix" evidence="5">
    <location>
        <begin position="63"/>
        <end position="68"/>
    </location>
</feature>
<feature type="strand" evidence="5">
    <location>
        <begin position="80"/>
        <end position="89"/>
    </location>
</feature>
<feature type="strand" evidence="5">
    <location>
        <begin position="91"/>
        <end position="97"/>
    </location>
</feature>
<feature type="helix" evidence="5">
    <location>
        <begin position="99"/>
        <end position="104"/>
    </location>
</feature>
<feature type="helix" evidence="5">
    <location>
        <begin position="107"/>
        <end position="109"/>
    </location>
</feature>
<feature type="helix" evidence="5">
    <location>
        <begin position="119"/>
        <end position="132"/>
    </location>
</feature>
<feature type="strand" evidence="5">
    <location>
        <begin position="136"/>
        <end position="140"/>
    </location>
</feature>
<feature type="strand" evidence="5">
    <location>
        <begin position="142"/>
        <end position="149"/>
    </location>
</feature>
<feature type="helix" evidence="5">
    <location>
        <begin position="151"/>
        <end position="153"/>
    </location>
</feature>
<feature type="strand" evidence="5">
    <location>
        <begin position="155"/>
        <end position="163"/>
    </location>
</feature>
<feature type="strand" evidence="5">
    <location>
        <begin position="166"/>
        <end position="177"/>
    </location>
</feature>
<feature type="helix" evidence="5">
    <location>
        <begin position="184"/>
        <end position="188"/>
    </location>
</feature>
<feature type="strand" evidence="5">
    <location>
        <begin position="193"/>
        <end position="208"/>
    </location>
</feature>
<feature type="helix" evidence="5">
    <location>
        <begin position="211"/>
        <end position="213"/>
    </location>
</feature>
<feature type="strand" evidence="5">
    <location>
        <begin position="221"/>
        <end position="226"/>
    </location>
</feature>
<feature type="strand" evidence="5">
    <location>
        <begin position="231"/>
        <end position="236"/>
    </location>
</feature>
<feature type="strand" evidence="5">
    <location>
        <begin position="242"/>
        <end position="249"/>
    </location>
</feature>
<feature type="turn" evidence="5">
    <location>
        <begin position="251"/>
        <end position="254"/>
    </location>
</feature>
<feature type="helix" evidence="5">
    <location>
        <begin position="257"/>
        <end position="259"/>
    </location>
</feature>
<feature type="helix" evidence="5">
    <location>
        <begin position="262"/>
        <end position="273"/>
    </location>
</feature>
<feature type="strand" evidence="5">
    <location>
        <begin position="281"/>
        <end position="296"/>
    </location>
</feature>
<feature type="strand" evidence="5">
    <location>
        <begin position="298"/>
        <end position="300"/>
    </location>
</feature>
<feature type="strand" evidence="5">
    <location>
        <begin position="303"/>
        <end position="305"/>
    </location>
</feature>
<feature type="turn" evidence="5">
    <location>
        <begin position="307"/>
        <end position="310"/>
    </location>
</feature>
<feature type="helix" evidence="5">
    <location>
        <begin position="320"/>
        <end position="339"/>
    </location>
</feature>
<feature type="helix" evidence="5">
    <location>
        <begin position="347"/>
        <end position="373"/>
    </location>
</feature>
<feature type="helix" evidence="5">
    <location>
        <begin position="376"/>
        <end position="378"/>
    </location>
</feature>
<feature type="turn" evidence="5">
    <location>
        <begin position="379"/>
        <end position="381"/>
    </location>
</feature>
<feature type="helix" evidence="5">
    <location>
        <begin position="388"/>
        <end position="392"/>
    </location>
</feature>
<feature type="strand" evidence="5">
    <location>
        <begin position="430"/>
        <end position="433"/>
    </location>
</feature>
<feature type="strand" evidence="5">
    <location>
        <begin position="436"/>
        <end position="439"/>
    </location>
</feature>
<feature type="helix" evidence="5">
    <location>
        <begin position="440"/>
        <end position="443"/>
    </location>
</feature>
<feature type="strand" evidence="5">
    <location>
        <begin position="445"/>
        <end position="452"/>
    </location>
</feature>
<feature type="helix" evidence="5">
    <location>
        <begin position="457"/>
        <end position="470"/>
    </location>
</feature>
<feature type="strand" evidence="5">
    <location>
        <begin position="474"/>
        <end position="479"/>
    </location>
</feature>
<feature type="turn" evidence="5">
    <location>
        <begin position="480"/>
        <end position="482"/>
    </location>
</feature>
<feature type="helix" evidence="5">
    <location>
        <begin position="490"/>
        <end position="493"/>
    </location>
</feature>
<feature type="turn" evidence="5">
    <location>
        <begin position="497"/>
        <end position="499"/>
    </location>
</feature>
<feature type="strand" evidence="5">
    <location>
        <begin position="501"/>
        <end position="504"/>
    </location>
</feature>
<feature type="strand" evidence="5">
    <location>
        <begin position="508"/>
        <end position="516"/>
    </location>
</feature>
<feature type="helix" evidence="5">
    <location>
        <begin position="521"/>
        <end position="532"/>
    </location>
</feature>
<proteinExistence type="evidence at protein level"/>
<name>DNRF_STREF</name>
<gene>
    <name type="primary">rdmE</name>
</gene>
<reference key="1">
    <citation type="journal article" date="1994" name="Microbiology">
        <title>Hybrid anthracycline antibiotics: production of new anthracyclines by cloned genes from Streptomyces purpurascens in Streptomyces galilaeus.</title>
        <authorList>
            <person name="Niemi J."/>
            <person name="Ylihonko K."/>
            <person name="Hakala J."/>
            <person name="Parssinen R."/>
            <person name="Kopio A."/>
            <person name="Mantsala P."/>
        </authorList>
    </citation>
    <scope>NUCLEOTIDE SEQUENCE [GENOMIC DNA]</scope>
    <source>
        <strain>ATCC 25489 / DSM 40310 / JCM 4509 / NBRC 13077 / Maria 515</strain>
    </source>
</reference>
<reference key="2">
    <citation type="submission" date="1994-08" db="EMBL/GenBank/DDBJ databases">
        <title>Characterization of the gene cluster involved in rhodomycin biosynthesis.</title>
        <authorList>
            <person name="Halo L."/>
            <person name="Wang Y."/>
            <person name="Mantsala P."/>
            <person name="Hakala J."/>
            <person name="Ylihonko K."/>
        </authorList>
    </citation>
    <scope>NUCLEOTIDE SEQUENCE [GENOMIC DNA]</scope>
    <source>
        <strain>ATCC 25489 / DSM 40310 / JCM 4509 / NBRC 13077 / Maria 515</strain>
    </source>
</reference>
<reference key="3">
    <citation type="journal article" date="1995" name="J. Bacteriol.">
        <title>Nucleotide sequences and expression of genes from Streptomyces purpurascens that cause the production of new anthracyclines in Streptomyces galilaeus.</title>
        <authorList>
            <person name="Niemi J."/>
            <person name="Mantsala P."/>
        </authorList>
    </citation>
    <scope>NUCLEOTIDE SEQUENCE [GENOMIC DNA]</scope>
    <source>
        <strain>ATCC 25489 / DSM 40310 / JCM 4509 / NBRC 13077 / Maria 515</strain>
    </source>
</reference>
<reference key="4">
    <citation type="submission" date="2001-10" db="EMBL/GenBank/DDBJ databases">
        <authorList>
            <person name="Halo L."/>
            <person name="Wang Y."/>
            <person name="Mantsala P."/>
            <person name="Hakala J."/>
            <person name="Ylihonko K."/>
        </authorList>
    </citation>
    <scope>NUCLEOTIDE SEQUENCE [GENOMIC DNA]</scope>
    <source>
        <strain>ATCC 25489 / DSM 40310 / JCM 4509 / NBRC 13077 / Maria 515</strain>
    </source>
</reference>
<reference key="5">
    <citation type="journal article" date="1999" name="Biochim. Biophys. Acta">
        <title>Characterization of aklavinone-11-hydroxylase from Streptomyces purpurascens.</title>
        <authorList>
            <person name="Niemi J."/>
            <person name="Wang Y."/>
            <person name="Airas K."/>
            <person name="Ylihonko K."/>
            <person name="Hakala J."/>
            <person name="Mantsala P."/>
        </authorList>
    </citation>
    <scope>PROTEIN SEQUENCE OF 2-13</scope>
    <scope>FUNCTION</scope>
    <scope>CATALYTIC ACTIVITY</scope>
    <scope>BIOPHYSICOCHEMICAL PROPERTIES</scope>
    <scope>SUBSTRATE SPECIFICITY</scope>
    <scope>ACTIVITY REGULATION</scope>
    <scope>SUBUNIT</scope>
</reference>
<reference key="6">
    <citation type="journal article" date="2009" name="J. Mol. Biol.">
        <title>Structural basis for substrate recognition and specificity in aklavinone-11-hydroxylase from rhodomycin biosynthesis.</title>
        <authorList>
            <person name="Lindqvist Y."/>
            <person name="Koskiniemi H."/>
            <person name="Jansson A."/>
            <person name="Sandalova T."/>
            <person name="Schnell R."/>
            <person name="Liu Z."/>
            <person name="Mantsala P."/>
            <person name="Niemi J."/>
            <person name="Schneider G."/>
        </authorList>
    </citation>
    <scope>X-RAY CRYSTALLOGRAPHY (2.49 ANGSTROMS) IN COMPLEX WITH FAD AND AKLAVINONE</scope>
    <scope>FUNCTION</scope>
    <scope>ACTIVE SITE</scope>
    <scope>MUTAGENESIS OF TYR-224 AND ARG-373</scope>
    <scope>SUBSTRATE SPECIFICITY</scope>
    <scope>REACTION MECHANISM</scope>
    <scope>COFACTOR</scope>
    <scope>SUBUNIT</scope>
</reference>
<sequence length="535" mass="57437">MNDHEVDVLVVGAGLGGLSTAMFLARQGVRVLVVERRPGLSPYPRAAGQNPRTMELLRIGGVADEVVRADDIRGTQGDFVIRLAESVRGEILRTVSESFDDMVAATEPCTPAGWAMLSQDKLEPILLAQARKHGGAIRFGTRLLSFRQHDDDAGAGVTARLAGPDGEYDLRAGYLVGADGNRSLVRESLGIGRYGHGTLTHMVGVIFDADLSGIMEPGTTGWYYLHHPEFKGTFGPTDRPDRHTLFVEYDPDEGERPEDFTPQRCVELIGLALDAPEVKPELVDIQGWEMAARIAERWREGRVFLAGDAAKVTPPTGGMSGNAAVADGFDLAWKLAAVLQGQAGAGLLDTYEDERKVAAELVVAEALAIYAQRMAPHMAEVWDKSVGYPETLLGFRYRSSAVLATDDDPARVENPLTPSGRPGFRGPHVLVSRHGERLSTVDLFGDGWTLLAGELGADWVAAAEAVSAELGVPVRAYRVGAGLTDPESAVSERYGIGKAGASLVRPDGIVAWRTDEAAADAAQTLEGVLRRVLDR</sequence>
<evidence type="ECO:0000269" key="1">
    <source>
    </source>
</evidence>
<evidence type="ECO:0000269" key="2">
    <source>
    </source>
</evidence>
<evidence type="ECO:0000305" key="3"/>
<evidence type="ECO:0007744" key="4">
    <source>
        <dbReference type="PDB" id="3IHG"/>
    </source>
</evidence>
<evidence type="ECO:0007829" key="5">
    <source>
        <dbReference type="PDB" id="3IHG"/>
    </source>
</evidence>